<protein>
    <recommendedName>
        <fullName>Uncharacterized 8.0 kDa protein</fullName>
    </recommendedName>
</protein>
<feature type="chain" id="PRO_0000099707" description="Uncharacterized 8.0 kDa protein">
    <location>
        <begin position="1"/>
        <end position="70"/>
    </location>
</feature>
<reference key="1">
    <citation type="journal article" date="1990" name="Virology">
        <title>The complete DNA sequence of vaccinia virus.</title>
        <authorList>
            <person name="Goebel S.J."/>
            <person name="Johnson G.P."/>
            <person name="Perkus M.E."/>
            <person name="Davis S.W."/>
            <person name="Winslow J.P."/>
            <person name="Paoletti E."/>
        </authorList>
    </citation>
    <scope>NUCLEOTIDE SEQUENCE [LARGE SCALE GENOMIC DNA]</scope>
</reference>
<reference key="2">
    <citation type="journal article" date="1990" name="Virology">
        <title>Appendix to 'The complete DNA sequence of vaccinia virus'.</title>
        <authorList>
            <person name="Goebel S.J."/>
            <person name="Johnson G.P."/>
            <person name="Perkus M.E."/>
            <person name="Davis S.W."/>
            <person name="Winslow J.P."/>
            <person name="Paoletti E."/>
        </authorList>
    </citation>
    <scope>COMPLETE GENOME</scope>
</reference>
<accession>P20555</accession>
<organism>
    <name type="scientific">Vaccinia virus (strain Copenhagen)</name>
    <name type="common">VACV</name>
    <dbReference type="NCBI Taxonomy" id="10249"/>
    <lineage>
        <taxon>Viruses</taxon>
        <taxon>Varidnaviria</taxon>
        <taxon>Bamfordvirae</taxon>
        <taxon>Nucleocytoviricota</taxon>
        <taxon>Pokkesviricetes</taxon>
        <taxon>Chitovirales</taxon>
        <taxon>Poxviridae</taxon>
        <taxon>Chordopoxvirinae</taxon>
        <taxon>Orthopoxvirus</taxon>
        <taxon>Vaccinia virus</taxon>
    </lineage>
</organism>
<name>YVEC_VACCC</name>
<dbReference type="EMBL" id="M35027">
    <property type="protein sequence ID" value="AAA48046.1"/>
    <property type="molecule type" value="Genomic_DNA"/>
</dbReference>
<dbReference type="PIR" id="I42509">
    <property type="entry name" value="I42509"/>
</dbReference>
<dbReference type="Proteomes" id="UP000008269">
    <property type="component" value="Segment"/>
</dbReference>
<dbReference type="InterPro" id="IPR035271">
    <property type="entry name" value="DUF5432"/>
</dbReference>
<dbReference type="Pfam" id="PF17497">
    <property type="entry name" value="DUF5432"/>
    <property type="match status" value="1"/>
</dbReference>
<sequence length="70" mass="7973">MLHEFHVRRLLKFRVESCSSIHSLSLHPLYVIMSPMDIIGFNSTSDTGIRYCSYMCLIIICCVSGELFSA</sequence>
<proteinExistence type="predicted"/>
<organismHost>
    <name type="scientific">Homo sapiens</name>
    <name type="common">Human</name>
    <dbReference type="NCBI Taxonomy" id="9606"/>
</organismHost>
<gene>
    <name type="ORF">E ORF C</name>
</gene>
<keyword id="KW-1185">Reference proteome</keyword>